<proteinExistence type="evidence at protein level"/>
<gene>
    <name type="primary">vps1</name>
    <name type="synonym">ps1</name>
</gene>
<dbReference type="EC" id="1.11.1.16" evidence="5"/>
<dbReference type="EMBL" id="AF175710">
    <property type="protein sequence ID" value="AAD54310.1"/>
    <property type="molecule type" value="Genomic_DNA"/>
</dbReference>
<dbReference type="SMR" id="Q9UVP6"/>
<dbReference type="CAZy" id="AA2">
    <property type="family name" value="Auxiliary Activities 2"/>
</dbReference>
<dbReference type="PeroxiBase" id="2302">
    <property type="entry name" value="PerVP02"/>
</dbReference>
<dbReference type="GlyCosmos" id="Q9UVP6">
    <property type="glycosylation" value="1 site, No reported glycans"/>
</dbReference>
<dbReference type="KEGG" id="ag:AAD54310"/>
<dbReference type="BRENDA" id="1.11.1.16">
    <property type="organism ID" value="4910"/>
</dbReference>
<dbReference type="SABIO-RK" id="Q9UVP6"/>
<dbReference type="GO" id="GO:0005576">
    <property type="term" value="C:extracellular region"/>
    <property type="evidence" value="ECO:0007669"/>
    <property type="project" value="UniProtKB-SubCell"/>
</dbReference>
<dbReference type="GO" id="GO:0020037">
    <property type="term" value="F:heme binding"/>
    <property type="evidence" value="ECO:0007669"/>
    <property type="project" value="InterPro"/>
</dbReference>
<dbReference type="GO" id="GO:0016689">
    <property type="term" value="F:manganese peroxidase activity"/>
    <property type="evidence" value="ECO:0007669"/>
    <property type="project" value="RHEA"/>
</dbReference>
<dbReference type="GO" id="GO:0046872">
    <property type="term" value="F:metal ion binding"/>
    <property type="evidence" value="ECO:0007669"/>
    <property type="project" value="UniProtKB-KW"/>
</dbReference>
<dbReference type="GO" id="GO:0052750">
    <property type="term" value="F:reactive-black-5:hydrogen-peroxide oxidoreductase activity"/>
    <property type="evidence" value="ECO:0007669"/>
    <property type="project" value="UniProtKB-EC"/>
</dbReference>
<dbReference type="GO" id="GO:0034599">
    <property type="term" value="P:cellular response to oxidative stress"/>
    <property type="evidence" value="ECO:0007669"/>
    <property type="project" value="InterPro"/>
</dbReference>
<dbReference type="GO" id="GO:0042744">
    <property type="term" value="P:hydrogen peroxide catabolic process"/>
    <property type="evidence" value="ECO:0007669"/>
    <property type="project" value="UniProtKB-KW"/>
</dbReference>
<dbReference type="GO" id="GO:0046274">
    <property type="term" value="P:lignin catabolic process"/>
    <property type="evidence" value="ECO:0007669"/>
    <property type="project" value="UniProtKB-KW"/>
</dbReference>
<dbReference type="GO" id="GO:0000302">
    <property type="term" value="P:response to reactive oxygen species"/>
    <property type="evidence" value="ECO:0007669"/>
    <property type="project" value="TreeGrafter"/>
</dbReference>
<dbReference type="CDD" id="cd00692">
    <property type="entry name" value="ligninase"/>
    <property type="match status" value="1"/>
</dbReference>
<dbReference type="Gene3D" id="1.10.520.10">
    <property type="match status" value="1"/>
</dbReference>
<dbReference type="Gene3D" id="1.10.420.10">
    <property type="entry name" value="Peroxidase, domain 2"/>
    <property type="match status" value="1"/>
</dbReference>
<dbReference type="InterPro" id="IPR044831">
    <property type="entry name" value="Ccp1-like"/>
</dbReference>
<dbReference type="InterPro" id="IPR002016">
    <property type="entry name" value="Haem_peroxidase"/>
</dbReference>
<dbReference type="InterPro" id="IPR010255">
    <property type="entry name" value="Haem_peroxidase_sf"/>
</dbReference>
<dbReference type="InterPro" id="IPR001621">
    <property type="entry name" value="Ligninase"/>
</dbReference>
<dbReference type="InterPro" id="IPR024589">
    <property type="entry name" value="Ligninase_C"/>
</dbReference>
<dbReference type="InterPro" id="IPR019794">
    <property type="entry name" value="Peroxidases_AS"/>
</dbReference>
<dbReference type="InterPro" id="IPR019793">
    <property type="entry name" value="Peroxidases_heam-ligand_BS"/>
</dbReference>
<dbReference type="PANTHER" id="PTHR31356:SF66">
    <property type="entry name" value="CATALASE-PEROXIDASE"/>
    <property type="match status" value="1"/>
</dbReference>
<dbReference type="PANTHER" id="PTHR31356">
    <property type="entry name" value="THYLAKOID LUMENAL 29 KDA PROTEIN, CHLOROPLASTIC-RELATED"/>
    <property type="match status" value="1"/>
</dbReference>
<dbReference type="Pfam" id="PF00141">
    <property type="entry name" value="peroxidase"/>
    <property type="match status" value="1"/>
</dbReference>
<dbReference type="Pfam" id="PF11895">
    <property type="entry name" value="Peroxidase_ext"/>
    <property type="match status" value="1"/>
</dbReference>
<dbReference type="PRINTS" id="PR00462">
    <property type="entry name" value="LIGNINASE"/>
</dbReference>
<dbReference type="PRINTS" id="PR00458">
    <property type="entry name" value="PEROXIDASE"/>
</dbReference>
<dbReference type="SUPFAM" id="SSF48113">
    <property type="entry name" value="Heme-dependent peroxidases"/>
    <property type="match status" value="1"/>
</dbReference>
<dbReference type="PROSITE" id="PS00435">
    <property type="entry name" value="PEROXIDASE_1"/>
    <property type="match status" value="1"/>
</dbReference>
<dbReference type="PROSITE" id="PS00436">
    <property type="entry name" value="PEROXIDASE_2"/>
    <property type="match status" value="1"/>
</dbReference>
<dbReference type="PROSITE" id="PS50873">
    <property type="entry name" value="PEROXIDASE_4"/>
    <property type="match status" value="1"/>
</dbReference>
<organism>
    <name type="scientific">Pleurotus eryngii</name>
    <name type="common">Boletus of the steppes</name>
    <dbReference type="NCBI Taxonomy" id="5323"/>
    <lineage>
        <taxon>Eukaryota</taxon>
        <taxon>Fungi</taxon>
        <taxon>Dikarya</taxon>
        <taxon>Basidiomycota</taxon>
        <taxon>Agaricomycotina</taxon>
        <taxon>Agaricomycetes</taxon>
        <taxon>Agaricomycetidae</taxon>
        <taxon>Agaricales</taxon>
        <taxon>Pleurotineae</taxon>
        <taxon>Pleurotaceae</taxon>
        <taxon>Pleurotus</taxon>
    </lineage>
</organism>
<comment type="function">
    <text evidence="5">A versatile ligninolytic peroxidase that combines the substrate specificity characteristics of the two other ligninolytic peroxidases, manganese peroxidase and lignin peroxidase.</text>
</comment>
<comment type="catalytic activity">
    <reaction evidence="5">
        <text>1-(4-hydroxy-3-methoxyphenyl)-2-(2-methoxyphenoxy)propane-1,3-diol + H2O2 = guaiacol + vanillin + glycolaldehyde + H2O</text>
        <dbReference type="Rhea" id="RHEA:22396"/>
        <dbReference type="ChEBI" id="CHEBI:15377"/>
        <dbReference type="ChEBI" id="CHEBI:16240"/>
        <dbReference type="ChEBI" id="CHEBI:17071"/>
        <dbReference type="ChEBI" id="CHEBI:18346"/>
        <dbReference type="ChEBI" id="CHEBI:28591"/>
        <dbReference type="ChEBI" id="CHEBI:53650"/>
        <dbReference type="EC" id="1.11.1.16"/>
    </reaction>
</comment>
<comment type="catalytic activity">
    <reaction evidence="5">
        <text>2 Mn(2+) + H2O2 + 2 H(+) = 2 Mn(3+) + 2 H2O</text>
        <dbReference type="Rhea" id="RHEA:22776"/>
        <dbReference type="ChEBI" id="CHEBI:15377"/>
        <dbReference type="ChEBI" id="CHEBI:15378"/>
        <dbReference type="ChEBI" id="CHEBI:16240"/>
        <dbReference type="ChEBI" id="CHEBI:29035"/>
        <dbReference type="ChEBI" id="CHEBI:29041"/>
        <dbReference type="EC" id="1.11.1.16"/>
    </reaction>
</comment>
<comment type="cofactor">
    <cofactor evidence="3">
        <name>heme b</name>
        <dbReference type="ChEBI" id="CHEBI:60344"/>
    </cofactor>
    <text evidence="3">Binds 1 heme b (iron(II)-protoporphyrin IX) group per subunit.</text>
</comment>
<comment type="cofactor">
    <cofactor evidence="3">
        <name>Ca(2+)</name>
        <dbReference type="ChEBI" id="CHEBI:29108"/>
    </cofactor>
    <text evidence="3">Binds 2 calcium ions per subunit.</text>
</comment>
<comment type="biophysicochemical properties">
    <kinetics>
        <KM evidence="5">48 uM for manganese</KM>
        <KM evidence="5">9 uM for H(2)O(2) (in manganese oxidation)</KM>
        <KM evidence="5">2 uM for H(2)O(2) (in manganese-independent oxidations)</KM>
        <KM evidence="5">17 uM for methoxyhydroquinone</KM>
        <KM evidence="5">200 uM for syringol</KM>
        <KM evidence="5">3500 uM for veratryl alcohol</KM>
        <KM evidence="5">2 uM for reactive black 5</KM>
    </kinetics>
    <phDependence>
        <text evidence="5">Optimum pH is 5 for manganese oxidation reaction, and around 3 for all the manganese-independent reactions.</text>
    </phDependence>
</comment>
<comment type="subcellular location">
    <subcellularLocation>
        <location>Secreted</location>
    </subcellularLocation>
</comment>
<comment type="similarity">
    <text evidence="7">Belongs to the peroxidase family. Ligninase subfamily.</text>
</comment>
<sequence>MAFAKLSAFVLALGATVALGESPTHRCLNKRVTCATGQTTANEACCALFPILDDIQTNLFDGAQCGEEVHESLRLTFHDAIAFSPALTNAGQFGGGGADGSMIIFSDTEPNFHANLGIDEIVEAQKPFIARHNISAADFIQFAGAIGVSNCAGAPRLNFFLGRPDATQIPPDGLVPEPFDDVTKILSRMGDAGFSTVEVVWLLASHTIAAADHVDPSIPGTPFDSTPSTFDSQFFLETMLQGTAFPGTPGNQGEVESPLAGEMRLQSDFLLARDSRSACEWQSMVNNMPKIQNRFTQVMKKLSLLGHNQADLIDCSDVIPVPKTLTKAATFPAGKSQADVEIVCNAAATPFPALASDPGPVTAVPPVPPS</sequence>
<evidence type="ECO:0000250" key="1"/>
<evidence type="ECO:0000255" key="2"/>
<evidence type="ECO:0000255" key="3">
    <source>
        <dbReference type="PROSITE-ProRule" id="PRU00297"/>
    </source>
</evidence>
<evidence type="ECO:0000255" key="4">
    <source>
        <dbReference type="PROSITE-ProRule" id="PRU10012"/>
    </source>
</evidence>
<evidence type="ECO:0000269" key="5">
    <source>
    </source>
</evidence>
<evidence type="ECO:0000269" key="6">
    <source>
    </source>
</evidence>
<evidence type="ECO:0000305" key="7"/>
<accession>Q9UVP6</accession>
<reference key="1">
    <citation type="journal article" date="2000" name="FEMS Microbiol. Lett.">
        <title>The cloning of a new peroxidase found in lignocellulose cultures of Pleurotus eryngii and sequence comparison with other fungal peroxidases.</title>
        <authorList>
            <person name="Camarero S."/>
            <person name="Ruiz-Duenas F.J."/>
            <person name="Sarkar S."/>
            <person name="Martinez M.J."/>
            <person name="Martinez A.T."/>
        </authorList>
    </citation>
    <scope>NUCLEOTIDE SEQUENCE [GENOMIC DNA]</scope>
    <scope>PROTEIN SEQUENCE OF 32-51</scope>
    <source>
        <strain>ATCC 90787 / CBS 613.91 / IJFM A169 / KCTC 26061</strain>
        <tissue>Mycelium</tissue>
    </source>
</reference>
<reference key="2">
    <citation type="journal article" date="1999" name="J. Biol. Chem.">
        <title>Description of a versatile peroxidase involved in the natural degradation of lignin that has both manganese peroxidase and lignin peroxidase substrate interaction sites.</title>
        <authorList>
            <person name="Camarero S."/>
            <person name="Sarkar S."/>
            <person name="Ruiz-Duenas F.J."/>
            <person name="Martinez M.J."/>
            <person name="Martinez A.T."/>
        </authorList>
    </citation>
    <scope>PROTEIN SEQUENCE OF 32-40</scope>
    <scope>FUNCTION</scope>
    <scope>CATALYTIC ACTIVITY</scope>
    <scope>SUBSTRATE SPECIFICITY</scope>
    <scope>BIOPHYSICOCHEMICAL PROPERTIES</scope>
    <scope>3D-STRUCTURE MODELING OF 32-370</scope>
    <source>
        <strain>ATCC 90787 / CBS 613.91 / IJFM A169 / KCTC 26061</strain>
        <tissue>Mycelium</tissue>
    </source>
</reference>
<name>VPS1_PLEER</name>
<protein>
    <recommendedName>
        <fullName>Versatile peroxidase VPS1</fullName>
        <ecNumber evidence="5">1.11.1.16</ecNumber>
    </recommendedName>
    <alternativeName>
        <fullName>Versatile solid phase peroxidase 1</fullName>
    </alternativeName>
</protein>
<feature type="signal peptide" evidence="2">
    <location>
        <begin position="1"/>
        <end position="20"/>
    </location>
</feature>
<feature type="propeptide" id="PRO_0000308169" evidence="5 6">
    <location>
        <begin position="21"/>
        <end position="31"/>
    </location>
</feature>
<feature type="chain" id="PRO_5000056981" description="Versatile peroxidase VPS1">
    <location>
        <begin position="32"/>
        <end position="370"/>
    </location>
</feature>
<feature type="active site" description="Proton acceptor" evidence="3 4">
    <location>
        <position position="78"/>
    </location>
</feature>
<feature type="active site" description="Tryptophan radical intermediate" evidence="1">
    <location>
        <position position="201"/>
    </location>
</feature>
<feature type="binding site" evidence="1">
    <location>
        <position position="67"/>
    </location>
    <ligand>
        <name>Mn(2+)</name>
        <dbReference type="ChEBI" id="CHEBI:29035"/>
    </ligand>
</feature>
<feature type="binding site" evidence="1">
    <location>
        <position position="71"/>
    </location>
    <ligand>
        <name>Mn(2+)</name>
        <dbReference type="ChEBI" id="CHEBI:29035"/>
    </ligand>
</feature>
<feature type="binding site" evidence="3">
    <location>
        <position position="79"/>
    </location>
    <ligand>
        <name>Ca(2+)</name>
        <dbReference type="ChEBI" id="CHEBI:29108"/>
        <label>1</label>
    </ligand>
</feature>
<feature type="binding site" evidence="3">
    <location>
        <position position="97"/>
    </location>
    <ligand>
        <name>Ca(2+)</name>
        <dbReference type="ChEBI" id="CHEBI:29108"/>
        <label>1</label>
    </ligand>
</feature>
<feature type="binding site" evidence="3">
    <location>
        <position position="99"/>
    </location>
    <ligand>
        <name>Ca(2+)</name>
        <dbReference type="ChEBI" id="CHEBI:29108"/>
        <label>1</label>
    </ligand>
</feature>
<feature type="binding site" evidence="3">
    <location>
        <position position="101"/>
    </location>
    <ligand>
        <name>Ca(2+)</name>
        <dbReference type="ChEBI" id="CHEBI:29108"/>
        <label>1</label>
    </ligand>
</feature>
<feature type="binding site" description="axial binding residue" evidence="3">
    <location>
        <position position="206"/>
    </location>
    <ligand>
        <name>heme b</name>
        <dbReference type="ChEBI" id="CHEBI:60344"/>
    </ligand>
    <ligandPart>
        <name>Fe</name>
        <dbReference type="ChEBI" id="CHEBI:18248"/>
    </ligandPart>
</feature>
<feature type="binding site" evidence="3">
    <location>
        <position position="207"/>
    </location>
    <ligand>
        <name>Ca(2+)</name>
        <dbReference type="ChEBI" id="CHEBI:29108"/>
        <label>2</label>
    </ligand>
</feature>
<feature type="binding site" evidence="1">
    <location>
        <begin position="210"/>
        <end position="214"/>
    </location>
    <ligand>
        <name>heme b</name>
        <dbReference type="ChEBI" id="CHEBI:60344"/>
    </ligand>
</feature>
<feature type="binding site" evidence="1">
    <location>
        <position position="212"/>
    </location>
    <ligand>
        <name>Mn(2+)</name>
        <dbReference type="ChEBI" id="CHEBI:29035"/>
    </ligand>
</feature>
<feature type="binding site" evidence="3">
    <location>
        <position position="224"/>
    </location>
    <ligand>
        <name>Ca(2+)</name>
        <dbReference type="ChEBI" id="CHEBI:29108"/>
        <label>2</label>
    </ligand>
</feature>
<feature type="binding site" evidence="3">
    <location>
        <position position="226"/>
    </location>
    <ligand>
        <name>Ca(2+)</name>
        <dbReference type="ChEBI" id="CHEBI:29108"/>
        <label>2</label>
    </ligand>
</feature>
<feature type="binding site">
    <location>
        <position position="229"/>
    </location>
    <ligand>
        <name>Ca(2+)</name>
        <dbReference type="ChEBI" id="CHEBI:29108"/>
        <label>2</label>
    </ligand>
</feature>
<feature type="binding site" evidence="3">
    <location>
        <position position="231"/>
    </location>
    <ligand>
        <name>Ca(2+)</name>
        <dbReference type="ChEBI" id="CHEBI:29108"/>
        <label>2</label>
    </ligand>
</feature>
<feature type="site" description="Transition state stabilizer" evidence="3">
    <location>
        <position position="74"/>
    </location>
</feature>
<feature type="glycosylation site" description="N-linked (GlcNAc...) asparagine" evidence="2">
    <location>
        <position position="133"/>
    </location>
</feature>
<feature type="disulfide bond" evidence="3">
    <location>
        <begin position="34"/>
        <end position="46"/>
    </location>
</feature>
<feature type="disulfide bond" evidence="3">
    <location>
        <begin position="45"/>
        <end position="315"/>
    </location>
</feature>
<feature type="disulfide bond" evidence="3">
    <location>
        <begin position="65"/>
        <end position="151"/>
    </location>
</feature>
<feature type="disulfide bond" evidence="3">
    <location>
        <begin position="279"/>
        <end position="344"/>
    </location>
</feature>
<keyword id="KW-0106">Calcium</keyword>
<keyword id="KW-0903">Direct protein sequencing</keyword>
<keyword id="KW-1015">Disulfide bond</keyword>
<keyword id="KW-0325">Glycoprotein</keyword>
<keyword id="KW-0349">Heme</keyword>
<keyword id="KW-0376">Hydrogen peroxide</keyword>
<keyword id="KW-0408">Iron</keyword>
<keyword id="KW-0439">Lignin degradation</keyword>
<keyword id="KW-0464">Manganese</keyword>
<keyword id="KW-0479">Metal-binding</keyword>
<keyword id="KW-0556">Organic radical</keyword>
<keyword id="KW-0560">Oxidoreductase</keyword>
<keyword id="KW-0575">Peroxidase</keyword>
<keyword id="KW-0964">Secreted</keyword>
<keyword id="KW-0732">Signal</keyword>
<keyword id="KW-0865">Zymogen</keyword>